<comment type="function">
    <text evidence="1">F(1)F(0) ATP synthase produces ATP from ADP in the presence of a proton or sodium gradient. F-type ATPases consist of two structural domains, F(1) containing the extramembraneous catalytic core and F(0) containing the membrane proton channel, linked together by a central stalk and a peripheral stalk. During catalysis, ATP synthesis in the catalytic domain of F(1) is coupled via a rotary mechanism of the central stalk subunits to proton translocation.</text>
</comment>
<comment type="function">
    <text evidence="1">This protein is part of the stalk that links CF(0) to CF(1). It either transmits conformational changes from CF(0) to CF(1) or is implicated in proton conduction.</text>
</comment>
<comment type="subunit">
    <text evidence="1">F-type ATPases have 2 components, F(1) - the catalytic core - and F(0) - the membrane proton channel. F(1) has five subunits: alpha(3), beta(3), gamma(1), delta(1), epsilon(1). F(0) has three main subunits: a(1), b(2) and c(10-14). The alpha and beta chains form an alternating ring which encloses part of the gamma chain. F(1) is attached to F(0) by a central stalk formed by the gamma and epsilon chains, while a peripheral stalk is formed by the delta and b chains.</text>
</comment>
<comment type="subcellular location">
    <subcellularLocation>
        <location evidence="1">Cell inner membrane</location>
        <topology evidence="1">Peripheral membrane protein</topology>
    </subcellularLocation>
</comment>
<comment type="similarity">
    <text evidence="1">Belongs to the ATPase delta chain family.</text>
</comment>
<reference key="1">
    <citation type="journal article" date="2005" name="Science">
        <title>Life at depth: Photobacterium profundum genome sequence and expression analysis.</title>
        <authorList>
            <person name="Vezzi A."/>
            <person name="Campanaro S."/>
            <person name="D'Angelo M."/>
            <person name="Simonato F."/>
            <person name="Vitulo N."/>
            <person name="Lauro F.M."/>
            <person name="Cestaro A."/>
            <person name="Malacrida G."/>
            <person name="Simionati B."/>
            <person name="Cannata N."/>
            <person name="Romualdi C."/>
            <person name="Bartlett D.H."/>
            <person name="Valle G."/>
        </authorList>
    </citation>
    <scope>NUCLEOTIDE SEQUENCE [LARGE SCALE GENOMIC DNA]</scope>
    <source>
        <strain>ATCC BAA-1253 / SS9</strain>
    </source>
</reference>
<accession>Q6LKZ9</accession>
<keyword id="KW-0066">ATP synthesis</keyword>
<keyword id="KW-0997">Cell inner membrane</keyword>
<keyword id="KW-1003">Cell membrane</keyword>
<keyword id="KW-0139">CF(1)</keyword>
<keyword id="KW-0375">Hydrogen ion transport</keyword>
<keyword id="KW-0406">Ion transport</keyword>
<keyword id="KW-0472">Membrane</keyword>
<keyword id="KW-1185">Reference proteome</keyword>
<keyword id="KW-0813">Transport</keyword>
<feature type="chain" id="PRO_0000371054" description="ATP synthase subunit delta 2">
    <location>
        <begin position="1"/>
        <end position="182"/>
    </location>
</feature>
<protein>
    <recommendedName>
        <fullName evidence="1">ATP synthase subunit delta 2</fullName>
    </recommendedName>
    <alternativeName>
        <fullName evidence="1">ATP synthase F(1) sector subunit delta 2</fullName>
    </alternativeName>
    <alternativeName>
        <fullName evidence="1">F-type ATPase subunit delta 2</fullName>
        <shortName evidence="1">F-ATPase subunit delta 2</shortName>
    </alternativeName>
</protein>
<evidence type="ECO:0000255" key="1">
    <source>
        <dbReference type="HAMAP-Rule" id="MF_01416"/>
    </source>
</evidence>
<name>ATPD2_PHOPR</name>
<proteinExistence type="inferred from homology"/>
<sequence length="182" mass="20261">MSDLKTIAQPYAKAAFDFALANKSLDQWAYMLMTTAEVASQPVILQEIKEIDFKGAKNAEAFTQMFLDICEGLLDEHCQNFVRVMAENGRLIVLPDVLNLFMEMKADFERTIEATVLSVEPLTEEQKVNLVKALEKRLSRTVELDCQIDESLVGGMLIKAGELVIDGTLKSSINRLASSLQA</sequence>
<gene>
    <name evidence="1" type="primary">atpH2</name>
    <name type="ordered locus">PBPRB0133</name>
</gene>
<organism>
    <name type="scientific">Photobacterium profundum (strain SS9)</name>
    <dbReference type="NCBI Taxonomy" id="298386"/>
    <lineage>
        <taxon>Bacteria</taxon>
        <taxon>Pseudomonadati</taxon>
        <taxon>Pseudomonadota</taxon>
        <taxon>Gammaproteobacteria</taxon>
        <taxon>Vibrionales</taxon>
        <taxon>Vibrionaceae</taxon>
        <taxon>Photobacterium</taxon>
    </lineage>
</organism>
<dbReference type="EMBL" id="CR378675">
    <property type="protein sequence ID" value="CAG22006.1"/>
    <property type="molecule type" value="Genomic_DNA"/>
</dbReference>
<dbReference type="RefSeq" id="WP_011220230.1">
    <property type="nucleotide sequence ID" value="NC_006371.1"/>
</dbReference>
<dbReference type="SMR" id="Q6LKZ9"/>
<dbReference type="STRING" id="298386.PBPRB0133"/>
<dbReference type="KEGG" id="ppr:PBPRB0133"/>
<dbReference type="eggNOG" id="COG0712">
    <property type="taxonomic scope" value="Bacteria"/>
</dbReference>
<dbReference type="HOGENOM" id="CLU_085114_3_0_6"/>
<dbReference type="Proteomes" id="UP000000593">
    <property type="component" value="Chromosome 2"/>
</dbReference>
<dbReference type="GO" id="GO:0005886">
    <property type="term" value="C:plasma membrane"/>
    <property type="evidence" value="ECO:0007669"/>
    <property type="project" value="UniProtKB-SubCell"/>
</dbReference>
<dbReference type="GO" id="GO:0045259">
    <property type="term" value="C:proton-transporting ATP synthase complex"/>
    <property type="evidence" value="ECO:0007669"/>
    <property type="project" value="UniProtKB-KW"/>
</dbReference>
<dbReference type="GO" id="GO:0046933">
    <property type="term" value="F:proton-transporting ATP synthase activity, rotational mechanism"/>
    <property type="evidence" value="ECO:0007669"/>
    <property type="project" value="UniProtKB-UniRule"/>
</dbReference>
<dbReference type="Gene3D" id="1.10.520.20">
    <property type="entry name" value="N-terminal domain of the delta subunit of the F1F0-ATP synthase"/>
    <property type="match status" value="1"/>
</dbReference>
<dbReference type="HAMAP" id="MF_01416">
    <property type="entry name" value="ATP_synth_delta_bact"/>
    <property type="match status" value="1"/>
</dbReference>
<dbReference type="InterPro" id="IPR026015">
    <property type="entry name" value="ATP_synth_OSCP/delta_N_sf"/>
</dbReference>
<dbReference type="InterPro" id="IPR020781">
    <property type="entry name" value="ATPase_OSCP/d_CS"/>
</dbReference>
<dbReference type="InterPro" id="IPR000711">
    <property type="entry name" value="ATPase_OSCP/dsu"/>
</dbReference>
<dbReference type="NCBIfam" id="TIGR01145">
    <property type="entry name" value="ATP_synt_delta"/>
    <property type="match status" value="1"/>
</dbReference>
<dbReference type="NCBIfam" id="NF004402">
    <property type="entry name" value="PRK05758.2-2"/>
    <property type="match status" value="1"/>
</dbReference>
<dbReference type="PANTHER" id="PTHR11910">
    <property type="entry name" value="ATP SYNTHASE DELTA CHAIN"/>
    <property type="match status" value="1"/>
</dbReference>
<dbReference type="Pfam" id="PF00213">
    <property type="entry name" value="OSCP"/>
    <property type="match status" value="1"/>
</dbReference>
<dbReference type="PRINTS" id="PR00125">
    <property type="entry name" value="ATPASEDELTA"/>
</dbReference>
<dbReference type="SUPFAM" id="SSF47928">
    <property type="entry name" value="N-terminal domain of the delta subunit of the F1F0-ATP synthase"/>
    <property type="match status" value="1"/>
</dbReference>
<dbReference type="PROSITE" id="PS00389">
    <property type="entry name" value="ATPASE_DELTA"/>
    <property type="match status" value="1"/>
</dbReference>